<name>ACLB1_ORYSJ</name>
<dbReference type="EC" id="2.3.3.8"/>
<dbReference type="EMBL" id="AP002883">
    <property type="protein sequence ID" value="BAB67865.1"/>
    <property type="molecule type" value="Genomic_DNA"/>
</dbReference>
<dbReference type="EMBL" id="AP003578">
    <property type="protein sequence ID" value="BAB60936.1"/>
    <property type="molecule type" value="Genomic_DNA"/>
</dbReference>
<dbReference type="EMBL" id="AP008207">
    <property type="protein sequence ID" value="BAF04731.1"/>
    <property type="molecule type" value="Genomic_DNA"/>
</dbReference>
<dbReference type="EMBL" id="AP014957">
    <property type="protein sequence ID" value="BAS71711.1"/>
    <property type="molecule type" value="Genomic_DNA"/>
</dbReference>
<dbReference type="EMBL" id="CM000138">
    <property type="protein sequence ID" value="EAZ11568.1"/>
    <property type="molecule type" value="Genomic_DNA"/>
</dbReference>
<dbReference type="EMBL" id="AK070568">
    <property type="status" value="NOT_ANNOTATED_CDS"/>
    <property type="molecule type" value="mRNA"/>
</dbReference>
<dbReference type="RefSeq" id="XP_015621337.1">
    <property type="nucleotide sequence ID" value="XM_015765851.1"/>
</dbReference>
<dbReference type="SMR" id="Q93VT8"/>
<dbReference type="FunCoup" id="Q93VT8">
    <property type="interactions" value="3167"/>
</dbReference>
<dbReference type="STRING" id="39947.Q93VT8"/>
<dbReference type="PaxDb" id="39947-Q93VT8"/>
<dbReference type="EnsemblPlants" id="Os01t0300200-01">
    <property type="protein sequence ID" value="Os01t0300200-01"/>
    <property type="gene ID" value="Os01g0300200"/>
</dbReference>
<dbReference type="EnsemblPlants" id="Os01t0300200-02">
    <property type="protein sequence ID" value="Os01t0300200-02"/>
    <property type="gene ID" value="Os01g0300200"/>
</dbReference>
<dbReference type="Gramene" id="Os01t0300200-01">
    <property type="protein sequence ID" value="Os01t0300200-01"/>
    <property type="gene ID" value="Os01g0300200"/>
</dbReference>
<dbReference type="Gramene" id="Os01t0300200-02">
    <property type="protein sequence ID" value="Os01t0300200-02"/>
    <property type="gene ID" value="Os01g0300200"/>
</dbReference>
<dbReference type="KEGG" id="dosa:Os01g0300200"/>
<dbReference type="eggNOG" id="KOG1254">
    <property type="taxonomic scope" value="Eukaryota"/>
</dbReference>
<dbReference type="InParanoid" id="Q93VT8"/>
<dbReference type="OMA" id="HMLRYQA"/>
<dbReference type="OrthoDB" id="3261737at2759"/>
<dbReference type="Proteomes" id="UP000000763">
    <property type="component" value="Chromosome 1"/>
</dbReference>
<dbReference type="Proteomes" id="UP000007752">
    <property type="component" value="Chromosome 1"/>
</dbReference>
<dbReference type="Proteomes" id="UP000059680">
    <property type="component" value="Chromosome 1"/>
</dbReference>
<dbReference type="ExpressionAtlas" id="Q93VT8">
    <property type="expression patterns" value="baseline and differential"/>
</dbReference>
<dbReference type="GO" id="GO:0005829">
    <property type="term" value="C:cytosol"/>
    <property type="evidence" value="ECO:0000318"/>
    <property type="project" value="GO_Central"/>
</dbReference>
<dbReference type="GO" id="GO:0005524">
    <property type="term" value="F:ATP binding"/>
    <property type="evidence" value="ECO:0007669"/>
    <property type="project" value="UniProtKB-KW"/>
</dbReference>
<dbReference type="GO" id="GO:0003878">
    <property type="term" value="F:ATP citrate synthase activity"/>
    <property type="evidence" value="ECO:0000318"/>
    <property type="project" value="GO_Central"/>
</dbReference>
<dbReference type="GO" id="GO:0016829">
    <property type="term" value="F:lyase activity"/>
    <property type="evidence" value="ECO:0007669"/>
    <property type="project" value="UniProtKB-KW"/>
</dbReference>
<dbReference type="GO" id="GO:0046872">
    <property type="term" value="F:metal ion binding"/>
    <property type="evidence" value="ECO:0007669"/>
    <property type="project" value="UniProtKB-KW"/>
</dbReference>
<dbReference type="GO" id="GO:0006085">
    <property type="term" value="P:acetyl-CoA biosynthetic process"/>
    <property type="evidence" value="ECO:0000318"/>
    <property type="project" value="GO_Central"/>
</dbReference>
<dbReference type="GO" id="GO:0006633">
    <property type="term" value="P:fatty acid biosynthetic process"/>
    <property type="evidence" value="ECO:0000318"/>
    <property type="project" value="GO_Central"/>
</dbReference>
<dbReference type="CDD" id="cd06100">
    <property type="entry name" value="CCL_ACL-C"/>
    <property type="match status" value="1"/>
</dbReference>
<dbReference type="FunFam" id="3.40.50.720:FF:000136">
    <property type="entry name" value="ATP-citrate synthase beta chain protein"/>
    <property type="match status" value="1"/>
</dbReference>
<dbReference type="FunFam" id="3.40.50.261:FF:000003">
    <property type="entry name" value="ATP-citrate synthase subunit"/>
    <property type="match status" value="1"/>
</dbReference>
<dbReference type="FunFam" id="1.10.230.10:FF:000005">
    <property type="entry name" value="ATP-citrate synthase subunit 1"/>
    <property type="match status" value="1"/>
</dbReference>
<dbReference type="Gene3D" id="1.10.580.10">
    <property type="entry name" value="Citrate Synthase, domain 1"/>
    <property type="match status" value="1"/>
</dbReference>
<dbReference type="Gene3D" id="1.10.230.10">
    <property type="entry name" value="Cytochrome P450-Terp, domain 2"/>
    <property type="match status" value="1"/>
</dbReference>
<dbReference type="Gene3D" id="3.40.50.720">
    <property type="entry name" value="NAD(P)-binding Rossmann-like Domain"/>
    <property type="match status" value="1"/>
</dbReference>
<dbReference type="Gene3D" id="3.40.50.261">
    <property type="entry name" value="Succinyl-CoA synthetase domains"/>
    <property type="match status" value="1"/>
</dbReference>
<dbReference type="InterPro" id="IPR017440">
    <property type="entry name" value="Cit_synth/succinyl-CoA_lig_AS"/>
</dbReference>
<dbReference type="InterPro" id="IPR016142">
    <property type="entry name" value="Citrate_synth-like_lrg_a-sub"/>
</dbReference>
<dbReference type="InterPro" id="IPR016143">
    <property type="entry name" value="Citrate_synth-like_sm_a-sub"/>
</dbReference>
<dbReference type="InterPro" id="IPR002020">
    <property type="entry name" value="Citrate_synthase"/>
</dbReference>
<dbReference type="InterPro" id="IPR036969">
    <property type="entry name" value="Citrate_synthase_sf"/>
</dbReference>
<dbReference type="InterPro" id="IPR033847">
    <property type="entry name" value="Citrt_syn/SCS-alpha_CS"/>
</dbReference>
<dbReference type="InterPro" id="IPR036291">
    <property type="entry name" value="NAD(P)-bd_dom_sf"/>
</dbReference>
<dbReference type="InterPro" id="IPR017866">
    <property type="entry name" value="Succ-CoA_synthase_bsu_CS"/>
</dbReference>
<dbReference type="InterPro" id="IPR005811">
    <property type="entry name" value="SUCC_ACL_C"/>
</dbReference>
<dbReference type="InterPro" id="IPR016102">
    <property type="entry name" value="Succinyl-CoA_synth-like"/>
</dbReference>
<dbReference type="PANTHER" id="PTHR23118">
    <property type="entry name" value="ATP-CITRATE SYNTHASE"/>
    <property type="match status" value="1"/>
</dbReference>
<dbReference type="PANTHER" id="PTHR23118:SF42">
    <property type="entry name" value="ATP-CITRATE SYNTHASE"/>
    <property type="match status" value="1"/>
</dbReference>
<dbReference type="Pfam" id="PF00285">
    <property type="entry name" value="Citrate_synt"/>
    <property type="match status" value="1"/>
</dbReference>
<dbReference type="Pfam" id="PF00549">
    <property type="entry name" value="Ligase_CoA"/>
    <property type="match status" value="1"/>
</dbReference>
<dbReference type="SUPFAM" id="SSF48256">
    <property type="entry name" value="Citrate synthase"/>
    <property type="match status" value="1"/>
</dbReference>
<dbReference type="SUPFAM" id="SSF51735">
    <property type="entry name" value="NAD(P)-binding Rossmann-fold domains"/>
    <property type="match status" value="1"/>
</dbReference>
<dbReference type="PROSITE" id="PS01216">
    <property type="entry name" value="SUCCINYL_COA_LIG_1"/>
    <property type="match status" value="1"/>
</dbReference>
<dbReference type="PROSITE" id="PS00399">
    <property type="entry name" value="SUCCINYL_COA_LIG_2"/>
    <property type="match status" value="1"/>
</dbReference>
<dbReference type="PROSITE" id="PS01217">
    <property type="entry name" value="SUCCINYL_COA_LIG_3"/>
    <property type="match status" value="1"/>
</dbReference>
<organism>
    <name type="scientific">Oryza sativa subsp. japonica</name>
    <name type="common">Rice</name>
    <dbReference type="NCBI Taxonomy" id="39947"/>
    <lineage>
        <taxon>Eukaryota</taxon>
        <taxon>Viridiplantae</taxon>
        <taxon>Streptophyta</taxon>
        <taxon>Embryophyta</taxon>
        <taxon>Tracheophyta</taxon>
        <taxon>Spermatophyta</taxon>
        <taxon>Magnoliopsida</taxon>
        <taxon>Liliopsida</taxon>
        <taxon>Poales</taxon>
        <taxon>Poaceae</taxon>
        <taxon>BOP clade</taxon>
        <taxon>Oryzoideae</taxon>
        <taxon>Oryzeae</taxon>
        <taxon>Oryzinae</taxon>
        <taxon>Oryza</taxon>
        <taxon>Oryza sativa</taxon>
    </lineage>
</organism>
<gene>
    <name type="primary">ACLB-1</name>
    <name type="ordered locus">Os01g0300200</name>
    <name type="ordered locus">LOC_Os01g19450</name>
    <name type="ORF">OsJ_01435</name>
    <name type="ORF">P0487H02.31</name>
    <name type="ORF">P0682B08.9</name>
</gene>
<evidence type="ECO:0000250" key="1"/>
<evidence type="ECO:0000255" key="2"/>
<evidence type="ECO:0000305" key="3"/>
<accession>Q93VT8</accession>
<accession>A0A0P0V1J6</accession>
<feature type="chain" id="PRO_0000412223" description="ATP-citrate synthase beta chain protein 1">
    <location>
        <begin position="1"/>
        <end position="608"/>
    </location>
</feature>
<feature type="active site" description="Tele-phosphohistidine intermediate" evidence="1">
    <location>
        <position position="273"/>
    </location>
</feature>
<feature type="binding site" evidence="1">
    <location>
        <begin position="214"/>
        <end position="234"/>
    </location>
    <ligand>
        <name>ATP</name>
        <dbReference type="ChEBI" id="CHEBI:30616"/>
    </ligand>
</feature>
<feature type="binding site" evidence="1">
    <location>
        <position position="231"/>
    </location>
    <ligand>
        <name>Mg(2+)</name>
        <dbReference type="ChEBI" id="CHEBI:18420"/>
    </ligand>
</feature>
<feature type="binding site" evidence="1">
    <location>
        <begin position="265"/>
        <end position="291"/>
    </location>
    <ligand>
        <name>ATP</name>
        <dbReference type="ChEBI" id="CHEBI:30616"/>
    </ligand>
</feature>
<feature type="binding site" evidence="2">
    <location>
        <begin position="292"/>
        <end position="302"/>
    </location>
    <ligand>
        <name>CoA</name>
        <dbReference type="ChEBI" id="CHEBI:57287"/>
    </ligand>
</feature>
<feature type="sequence conflict" description="In Ref. 6; AK070568." evidence="3" ref="6">
    <original>R</original>
    <variation>G</variation>
    <location>
        <position position="465"/>
    </location>
</feature>
<reference key="1">
    <citation type="journal article" date="2002" name="Nature">
        <title>The genome sequence and structure of rice chromosome 1.</title>
        <authorList>
            <person name="Sasaki T."/>
            <person name="Matsumoto T."/>
            <person name="Yamamoto K."/>
            <person name="Sakata K."/>
            <person name="Baba T."/>
            <person name="Katayose Y."/>
            <person name="Wu J."/>
            <person name="Niimura Y."/>
            <person name="Cheng Z."/>
            <person name="Nagamura Y."/>
            <person name="Antonio B.A."/>
            <person name="Kanamori H."/>
            <person name="Hosokawa S."/>
            <person name="Masukawa M."/>
            <person name="Arikawa K."/>
            <person name="Chiden Y."/>
            <person name="Hayashi M."/>
            <person name="Okamoto M."/>
            <person name="Ando T."/>
            <person name="Aoki H."/>
            <person name="Arita K."/>
            <person name="Hamada M."/>
            <person name="Harada C."/>
            <person name="Hijishita S."/>
            <person name="Honda M."/>
            <person name="Ichikawa Y."/>
            <person name="Idonuma A."/>
            <person name="Iijima M."/>
            <person name="Ikeda M."/>
            <person name="Ikeno M."/>
            <person name="Ito S."/>
            <person name="Ito T."/>
            <person name="Ito Y."/>
            <person name="Ito Y."/>
            <person name="Iwabuchi A."/>
            <person name="Kamiya K."/>
            <person name="Karasawa W."/>
            <person name="Katagiri S."/>
            <person name="Kikuta A."/>
            <person name="Kobayashi N."/>
            <person name="Kono I."/>
            <person name="Machita K."/>
            <person name="Maehara T."/>
            <person name="Mizuno H."/>
            <person name="Mizubayashi T."/>
            <person name="Mukai Y."/>
            <person name="Nagasaki H."/>
            <person name="Nakashima M."/>
            <person name="Nakama Y."/>
            <person name="Nakamichi Y."/>
            <person name="Nakamura M."/>
            <person name="Namiki N."/>
            <person name="Negishi M."/>
            <person name="Ohta I."/>
            <person name="Ono N."/>
            <person name="Saji S."/>
            <person name="Sakai K."/>
            <person name="Shibata M."/>
            <person name="Shimokawa T."/>
            <person name="Shomura A."/>
            <person name="Song J."/>
            <person name="Takazaki Y."/>
            <person name="Terasawa K."/>
            <person name="Tsuji K."/>
            <person name="Waki K."/>
            <person name="Yamagata H."/>
            <person name="Yamane H."/>
            <person name="Yoshiki S."/>
            <person name="Yoshihara R."/>
            <person name="Yukawa K."/>
            <person name="Zhong H."/>
            <person name="Iwama H."/>
            <person name="Endo T."/>
            <person name="Ito H."/>
            <person name="Hahn J.H."/>
            <person name="Kim H.-I."/>
            <person name="Eun M.-Y."/>
            <person name="Yano M."/>
            <person name="Jiang J."/>
            <person name="Gojobori T."/>
        </authorList>
    </citation>
    <scope>NUCLEOTIDE SEQUENCE [LARGE SCALE GENOMIC DNA]</scope>
    <source>
        <strain>cv. Nipponbare</strain>
    </source>
</reference>
<reference key="2">
    <citation type="journal article" date="2005" name="Nature">
        <title>The map-based sequence of the rice genome.</title>
        <authorList>
            <consortium name="International rice genome sequencing project (IRGSP)"/>
        </authorList>
    </citation>
    <scope>NUCLEOTIDE SEQUENCE [LARGE SCALE GENOMIC DNA]</scope>
    <source>
        <strain>cv. Nipponbare</strain>
    </source>
</reference>
<reference key="3">
    <citation type="journal article" date="2008" name="Nucleic Acids Res.">
        <title>The rice annotation project database (RAP-DB): 2008 update.</title>
        <authorList>
            <consortium name="The rice annotation project (RAP)"/>
        </authorList>
    </citation>
    <scope>GENOME REANNOTATION</scope>
    <source>
        <strain>cv. Nipponbare</strain>
    </source>
</reference>
<reference key="4">
    <citation type="journal article" date="2013" name="Rice">
        <title>Improvement of the Oryza sativa Nipponbare reference genome using next generation sequence and optical map data.</title>
        <authorList>
            <person name="Kawahara Y."/>
            <person name="de la Bastide M."/>
            <person name="Hamilton J.P."/>
            <person name="Kanamori H."/>
            <person name="McCombie W.R."/>
            <person name="Ouyang S."/>
            <person name="Schwartz D.C."/>
            <person name="Tanaka T."/>
            <person name="Wu J."/>
            <person name="Zhou S."/>
            <person name="Childs K.L."/>
            <person name="Davidson R.M."/>
            <person name="Lin H."/>
            <person name="Quesada-Ocampo L."/>
            <person name="Vaillancourt B."/>
            <person name="Sakai H."/>
            <person name="Lee S.S."/>
            <person name="Kim J."/>
            <person name="Numa H."/>
            <person name="Itoh T."/>
            <person name="Buell C.R."/>
            <person name="Matsumoto T."/>
        </authorList>
    </citation>
    <scope>GENOME REANNOTATION</scope>
    <source>
        <strain>cv. Nipponbare</strain>
    </source>
</reference>
<reference key="5">
    <citation type="journal article" date="2005" name="PLoS Biol.">
        <title>The genomes of Oryza sativa: a history of duplications.</title>
        <authorList>
            <person name="Yu J."/>
            <person name="Wang J."/>
            <person name="Lin W."/>
            <person name="Li S."/>
            <person name="Li H."/>
            <person name="Zhou J."/>
            <person name="Ni P."/>
            <person name="Dong W."/>
            <person name="Hu S."/>
            <person name="Zeng C."/>
            <person name="Zhang J."/>
            <person name="Zhang Y."/>
            <person name="Li R."/>
            <person name="Xu Z."/>
            <person name="Li S."/>
            <person name="Li X."/>
            <person name="Zheng H."/>
            <person name="Cong L."/>
            <person name="Lin L."/>
            <person name="Yin J."/>
            <person name="Geng J."/>
            <person name="Li G."/>
            <person name="Shi J."/>
            <person name="Liu J."/>
            <person name="Lv H."/>
            <person name="Li J."/>
            <person name="Wang J."/>
            <person name="Deng Y."/>
            <person name="Ran L."/>
            <person name="Shi X."/>
            <person name="Wang X."/>
            <person name="Wu Q."/>
            <person name="Li C."/>
            <person name="Ren X."/>
            <person name="Wang J."/>
            <person name="Wang X."/>
            <person name="Li D."/>
            <person name="Liu D."/>
            <person name="Zhang X."/>
            <person name="Ji Z."/>
            <person name="Zhao W."/>
            <person name="Sun Y."/>
            <person name="Zhang Z."/>
            <person name="Bao J."/>
            <person name="Han Y."/>
            <person name="Dong L."/>
            <person name="Ji J."/>
            <person name="Chen P."/>
            <person name="Wu S."/>
            <person name="Liu J."/>
            <person name="Xiao Y."/>
            <person name="Bu D."/>
            <person name="Tan J."/>
            <person name="Yang L."/>
            <person name="Ye C."/>
            <person name="Zhang J."/>
            <person name="Xu J."/>
            <person name="Zhou Y."/>
            <person name="Yu Y."/>
            <person name="Zhang B."/>
            <person name="Zhuang S."/>
            <person name="Wei H."/>
            <person name="Liu B."/>
            <person name="Lei M."/>
            <person name="Yu H."/>
            <person name="Li Y."/>
            <person name="Xu H."/>
            <person name="Wei S."/>
            <person name="He X."/>
            <person name="Fang L."/>
            <person name="Zhang Z."/>
            <person name="Zhang Y."/>
            <person name="Huang X."/>
            <person name="Su Z."/>
            <person name="Tong W."/>
            <person name="Li J."/>
            <person name="Tong Z."/>
            <person name="Li S."/>
            <person name="Ye J."/>
            <person name="Wang L."/>
            <person name="Fang L."/>
            <person name="Lei T."/>
            <person name="Chen C.-S."/>
            <person name="Chen H.-C."/>
            <person name="Xu Z."/>
            <person name="Li H."/>
            <person name="Huang H."/>
            <person name="Zhang F."/>
            <person name="Xu H."/>
            <person name="Li N."/>
            <person name="Zhao C."/>
            <person name="Li S."/>
            <person name="Dong L."/>
            <person name="Huang Y."/>
            <person name="Li L."/>
            <person name="Xi Y."/>
            <person name="Qi Q."/>
            <person name="Li W."/>
            <person name="Zhang B."/>
            <person name="Hu W."/>
            <person name="Zhang Y."/>
            <person name="Tian X."/>
            <person name="Jiao Y."/>
            <person name="Liang X."/>
            <person name="Jin J."/>
            <person name="Gao L."/>
            <person name="Zheng W."/>
            <person name="Hao B."/>
            <person name="Liu S.-M."/>
            <person name="Wang W."/>
            <person name="Yuan L."/>
            <person name="Cao M."/>
            <person name="McDermott J."/>
            <person name="Samudrala R."/>
            <person name="Wang J."/>
            <person name="Wong G.K.-S."/>
            <person name="Yang H."/>
        </authorList>
    </citation>
    <scope>NUCLEOTIDE SEQUENCE [LARGE SCALE GENOMIC DNA]</scope>
    <source>
        <strain>cv. Nipponbare</strain>
    </source>
</reference>
<reference key="6">
    <citation type="journal article" date="2003" name="Science">
        <title>Collection, mapping, and annotation of over 28,000 cDNA clones from japonica rice.</title>
        <authorList>
            <consortium name="The rice full-length cDNA consortium"/>
        </authorList>
    </citation>
    <scope>NUCLEOTIDE SEQUENCE [LARGE SCALE MRNA]</scope>
    <source>
        <strain>cv. Nipponbare</strain>
    </source>
</reference>
<protein>
    <recommendedName>
        <fullName>ATP-citrate synthase beta chain protein 1</fullName>
        <shortName>ATP-citrate synthase B-1</shortName>
        <ecNumber>2.3.3.8</ecNumber>
    </recommendedName>
    <alternativeName>
        <fullName>ATP-citrate lyase B-1</fullName>
    </alternativeName>
    <alternativeName>
        <fullName>Citrate cleavage enzyme B-1</fullName>
    </alternativeName>
</protein>
<sequence length="608" mass="66070">MATGQIFSKTTQALFYNYKQLPIQRMLDFDFLCGRETPSVAGIINPGSDGFQKLFFGQEEIAIPVHPTIEAACNAHPTADVFINFASFRSAAASSMSALKQPTIRVVAIIAEGVPESDTKQLISYARANNKVIIGPATVGGIQAGAFKIGDTAGTIDNIIQCKLYRPGSVGFVSKSGGMSNEMYNTIARVTDGIYEGIAIGGDVFPGSTLSDHILRFNNIPQVKMMVVLGELGGKDEYSLVEALKQGKVQKPVVAWVSGTCARLFKSEVQFGHAGAKSGGELESAQAKNQALKDAGAVVPTSYEALETAIKETFEKLVEDGKISPVTEITPPPIPEDLKTAIKSGKVRAPTHIISTISDDRGEEPCYAGVPMSTIIEQGYGVGDVISLLWFKRSLPRYCTQFIEMCIMLCADHGPCVSGAHNSIVTARAGKDLVSSLVSGLLTIGPRFGGAIDDAARYFKDAYDRNLTPYEFVEGMKKKGIRVPGIGHRIKSRDNRDKRVQLLQKYAHTHFPSVKYMEYAVQVETYTLSKANNLVLNVDGAIGSLFLDLLSGSGMFSKQEIDEIVEIGYLNGLFVLARSIGLIGHTFDQKRLKQPLYRHPWEDVLYTK</sequence>
<comment type="function">
    <text evidence="1">ATP citrate-lyase is the primary enzyme responsible for the synthesis of cytosolic acetyl-CoA, used for the elongation of fatty acids and biosynthesis of isoprenoids, flavonoids and malonated derivatives. May supply substrate to the cytosolic acetyl-CoA carboxylase, which generates the malonyl-CoA used for the synthesis of a multitude of compounds, including very long chain fatty acids and flavonoids. In contrast to all known animal ACL enzymes having a homomeric structure, plant ACLs are composed of alpha and beta chains (By similarity).</text>
</comment>
<comment type="catalytic activity">
    <reaction>
        <text>oxaloacetate + acetyl-CoA + ADP + phosphate = citrate + ATP + CoA</text>
        <dbReference type="Rhea" id="RHEA:21160"/>
        <dbReference type="ChEBI" id="CHEBI:16452"/>
        <dbReference type="ChEBI" id="CHEBI:16947"/>
        <dbReference type="ChEBI" id="CHEBI:30616"/>
        <dbReference type="ChEBI" id="CHEBI:43474"/>
        <dbReference type="ChEBI" id="CHEBI:57287"/>
        <dbReference type="ChEBI" id="CHEBI:57288"/>
        <dbReference type="ChEBI" id="CHEBI:456216"/>
        <dbReference type="EC" id="2.3.3.8"/>
    </reaction>
</comment>
<comment type="subunit">
    <text evidence="1">Heterooctamer of 4 alpha and 4 beta chains.</text>
</comment>
<comment type="subcellular location">
    <subcellularLocation>
        <location evidence="1">Cytoplasm</location>
        <location evidence="1">Cytosol</location>
    </subcellularLocation>
</comment>
<comment type="similarity">
    <text evidence="3">Belongs to the succinate/malate CoA ligase alpha subunit family.</text>
</comment>
<proteinExistence type="evidence at transcript level"/>
<keyword id="KW-0012">Acyltransferase</keyword>
<keyword id="KW-0067">ATP-binding</keyword>
<keyword id="KW-0963">Cytoplasm</keyword>
<keyword id="KW-0444">Lipid biosynthesis</keyword>
<keyword id="KW-0443">Lipid metabolism</keyword>
<keyword id="KW-0456">Lyase</keyword>
<keyword id="KW-0460">Magnesium</keyword>
<keyword id="KW-0479">Metal-binding</keyword>
<keyword id="KW-0547">Nucleotide-binding</keyword>
<keyword id="KW-1185">Reference proteome</keyword>
<keyword id="KW-0808">Transferase</keyword>